<comment type="function">
    <text>Core component of nucleosome. Nucleosomes wrap and compact DNA into chromatin, limiting DNA accessibility to the cellular machineries which require DNA as a template. Histones thereby play a central role in transcription regulation, DNA repair, DNA replication and chromosomal stability. DNA accessibility is regulated via a complex set of post-translational modifications of histones, also called histone code, and nucleosome remodeling.</text>
</comment>
<comment type="subunit">
    <text>The nucleosome is a histone octamer containing two molecules each of H2A, H2B, H3 and H4 assembled in one H3-H4 heterotetramer and two H2A-H2B heterodimers. The octamer wraps approximately 147 bp of DNA.</text>
</comment>
<comment type="subcellular location">
    <subcellularLocation>
        <location>Nucleus</location>
    </subcellularLocation>
    <subcellularLocation>
        <location>Chromosome</location>
    </subcellularLocation>
</comment>
<comment type="similarity">
    <text evidence="4">Belongs to the histone H2A family.</text>
</comment>
<evidence type="ECO:0000250" key="1"/>
<evidence type="ECO:0000256" key="2">
    <source>
        <dbReference type="SAM" id="MobiDB-lite"/>
    </source>
</evidence>
<evidence type="ECO:0000269" key="3">
    <source>
    </source>
</evidence>
<evidence type="ECO:0000305" key="4"/>
<reference key="1">
    <citation type="journal article" date="1982" name="Eur. J. Biochem.">
        <title>The amino-acid sequence of histone H2A from cuttlefish Sepia officinalis.</title>
        <authorList>
            <person name="Wouters-Tyrou D."/>
            <person name="Martin-Ponthieu A."/>
            <person name="Briand G."/>
            <person name="Sautiere P."/>
            <person name="Biserte G."/>
        </authorList>
    </citation>
    <scope>PROTEIN SEQUENCE OF 2-125</scope>
    <scope>ACETYLATION AT SER-2</scope>
</reference>
<keyword id="KW-0007">Acetylation</keyword>
<keyword id="KW-0158">Chromosome</keyword>
<keyword id="KW-0903">Direct protein sequencing</keyword>
<keyword id="KW-0238">DNA-binding</keyword>
<keyword id="KW-0488">Methylation</keyword>
<keyword id="KW-0544">Nucleosome core</keyword>
<keyword id="KW-0539">Nucleus</keyword>
<proteinExistence type="evidence at protein level"/>
<feature type="initiator methionine" description="Removed" evidence="1">
    <location>
        <position position="1"/>
    </location>
</feature>
<feature type="chain" id="PRO_0000055278" description="Histone H2A">
    <location>
        <begin position="2"/>
        <end position="125"/>
    </location>
</feature>
<feature type="region of interest" description="Disordered" evidence="2">
    <location>
        <begin position="1"/>
        <end position="23"/>
    </location>
</feature>
<feature type="compositionally biased region" description="Basic residues" evidence="2">
    <location>
        <begin position="1"/>
        <end position="18"/>
    </location>
</feature>
<feature type="modified residue" description="N-acetylserine" evidence="3">
    <location>
        <position position="2"/>
    </location>
</feature>
<feature type="modified residue" description="N5-methylglutamine" evidence="1">
    <location>
        <position position="104"/>
    </location>
</feature>
<organism>
    <name type="scientific">Sepia officinalis</name>
    <name type="common">Common cuttlefish</name>
    <dbReference type="NCBI Taxonomy" id="6610"/>
    <lineage>
        <taxon>Eukaryota</taxon>
        <taxon>Metazoa</taxon>
        <taxon>Spiralia</taxon>
        <taxon>Lophotrochozoa</taxon>
        <taxon>Mollusca</taxon>
        <taxon>Cephalopoda</taxon>
        <taxon>Coleoidea</taxon>
        <taxon>Decapodiformes</taxon>
        <taxon>Sepiida</taxon>
        <taxon>Sepiina</taxon>
        <taxon>Sepiidae</taxon>
        <taxon>Sepia</taxon>
    </lineage>
</organism>
<name>H2A_SEPOF</name>
<sequence length="125" mass="13421">MSGRGKGGKVKGKSKTRSSRAGLQFPVGRIHRLLRKGNYAQRVGAGAPVYLAAVMEYLAAEVLELAGNAARDNKKSRIIPRHLQLAIRNDEELNKLLSGVTIAQGGVLPNIQAVLLPKKTQKAAK</sequence>
<dbReference type="PIR" id="A02595">
    <property type="entry name" value="HSOO2"/>
</dbReference>
<dbReference type="SMR" id="P02268"/>
<dbReference type="iPTMnet" id="P02268"/>
<dbReference type="GO" id="GO:0000786">
    <property type="term" value="C:nucleosome"/>
    <property type="evidence" value="ECO:0007669"/>
    <property type="project" value="UniProtKB-KW"/>
</dbReference>
<dbReference type="GO" id="GO:0005634">
    <property type="term" value="C:nucleus"/>
    <property type="evidence" value="ECO:0007669"/>
    <property type="project" value="UniProtKB-SubCell"/>
</dbReference>
<dbReference type="GO" id="GO:0003677">
    <property type="term" value="F:DNA binding"/>
    <property type="evidence" value="ECO:0007669"/>
    <property type="project" value="UniProtKB-KW"/>
</dbReference>
<dbReference type="GO" id="GO:0046982">
    <property type="term" value="F:protein heterodimerization activity"/>
    <property type="evidence" value="ECO:0007669"/>
    <property type="project" value="InterPro"/>
</dbReference>
<dbReference type="GO" id="GO:0030527">
    <property type="term" value="F:structural constituent of chromatin"/>
    <property type="evidence" value="ECO:0007669"/>
    <property type="project" value="InterPro"/>
</dbReference>
<dbReference type="CDD" id="cd00074">
    <property type="entry name" value="HFD_H2A"/>
    <property type="match status" value="1"/>
</dbReference>
<dbReference type="FunFam" id="1.10.20.10:FF:000020">
    <property type="entry name" value="Histone H2A"/>
    <property type="match status" value="1"/>
</dbReference>
<dbReference type="Gene3D" id="1.10.20.10">
    <property type="entry name" value="Histone, subunit A"/>
    <property type="match status" value="1"/>
</dbReference>
<dbReference type="InterPro" id="IPR009072">
    <property type="entry name" value="Histone-fold"/>
</dbReference>
<dbReference type="InterPro" id="IPR002119">
    <property type="entry name" value="Histone_H2A"/>
</dbReference>
<dbReference type="InterPro" id="IPR007125">
    <property type="entry name" value="Histone_H2A/H2B/H3"/>
</dbReference>
<dbReference type="InterPro" id="IPR032454">
    <property type="entry name" value="Histone_H2A_C"/>
</dbReference>
<dbReference type="InterPro" id="IPR032458">
    <property type="entry name" value="Histone_H2A_CS"/>
</dbReference>
<dbReference type="PANTHER" id="PTHR23430">
    <property type="entry name" value="HISTONE H2A"/>
    <property type="match status" value="1"/>
</dbReference>
<dbReference type="Pfam" id="PF00125">
    <property type="entry name" value="Histone"/>
    <property type="match status" value="1"/>
</dbReference>
<dbReference type="Pfam" id="PF16211">
    <property type="entry name" value="Histone_H2A_C"/>
    <property type="match status" value="1"/>
</dbReference>
<dbReference type="PRINTS" id="PR00620">
    <property type="entry name" value="HISTONEH2A"/>
</dbReference>
<dbReference type="SMART" id="SM00414">
    <property type="entry name" value="H2A"/>
    <property type="match status" value="1"/>
</dbReference>
<dbReference type="SUPFAM" id="SSF47113">
    <property type="entry name" value="Histone-fold"/>
    <property type="match status" value="1"/>
</dbReference>
<dbReference type="PROSITE" id="PS00046">
    <property type="entry name" value="HISTONE_H2A"/>
    <property type="match status" value="1"/>
</dbReference>
<protein>
    <recommendedName>
        <fullName>Histone H2A</fullName>
    </recommendedName>
</protein>
<accession>P02268</accession>